<gene>
    <name type="primary">PNLIP</name>
</gene>
<reference evidence="6" key="1">
    <citation type="journal article" date="2003" name="Comp. Biochem. Physiol.">
        <title>Purification and partial characterization of feline classical pancreatic lipase.</title>
        <authorList>
            <person name="Steiner J.M."/>
            <person name="Wilson B.G."/>
            <person name="Williams D.A."/>
        </authorList>
    </citation>
    <scope>PROTEIN SEQUENCE</scope>
    <source>
        <tissue evidence="4">Pancreas</tissue>
    </source>
</reference>
<feature type="chain" id="PRO_0000090355" description="Pancreatic triacylglycerol lipase">
    <location>
        <begin position="1"/>
        <end position="25" status="greater than"/>
    </location>
</feature>
<feature type="disulfide bond" evidence="1">
    <location>
        <begin position="4"/>
        <end position="10"/>
    </location>
</feature>
<feature type="unsure residue">
    <location>
        <position position="4"/>
    </location>
</feature>
<feature type="unsure residue">
    <location>
        <position position="10"/>
    </location>
</feature>
<feature type="non-terminal residue" evidence="5">
    <location>
        <position position="25"/>
    </location>
</feature>
<dbReference type="EC" id="3.1.1.3" evidence="2"/>
<dbReference type="SMR" id="P83629"/>
<dbReference type="ESTHER" id="felca-lipp">
    <property type="family name" value="Pancreatic_lipase"/>
</dbReference>
<dbReference type="PaxDb" id="9685-ENSFCAP00000001406"/>
<dbReference type="eggNOG" id="ENOG502QUK7">
    <property type="taxonomic scope" value="Eukaryota"/>
</dbReference>
<dbReference type="HOGENOM" id="CLU_027171_0_2_1"/>
<dbReference type="InParanoid" id="P83629"/>
<dbReference type="TreeFam" id="TF324997"/>
<dbReference type="Proteomes" id="UP000011712">
    <property type="component" value="Unplaced"/>
</dbReference>
<dbReference type="GO" id="GO:0005576">
    <property type="term" value="C:extracellular region"/>
    <property type="evidence" value="ECO:0007669"/>
    <property type="project" value="UniProtKB-SubCell"/>
</dbReference>
<dbReference type="GO" id="GO:0047376">
    <property type="term" value="F:all-trans-retinyl-palmitate hydrolase, all-trans-retinol forming activity"/>
    <property type="evidence" value="ECO:0007669"/>
    <property type="project" value="RHEA"/>
</dbReference>
<dbReference type="GO" id="GO:0004806">
    <property type="term" value="F:triacylglycerol lipase activity"/>
    <property type="evidence" value="ECO:0000250"/>
    <property type="project" value="UniProtKB"/>
</dbReference>
<dbReference type="GO" id="GO:0016042">
    <property type="term" value="P:lipid catabolic process"/>
    <property type="evidence" value="ECO:0007669"/>
    <property type="project" value="UniProtKB-KW"/>
</dbReference>
<dbReference type="InterPro" id="IPR002331">
    <property type="entry name" value="Lipase_panc"/>
</dbReference>
<dbReference type="PRINTS" id="PR00823">
    <property type="entry name" value="PANCLIPASE"/>
</dbReference>
<sequence>KEICFPRLGCFSDDAPWAGIAQRPL</sequence>
<name>LIPP_FELCA</name>
<protein>
    <recommendedName>
        <fullName evidence="6">Pancreatic triacylglycerol lipase</fullName>
        <shortName>PL</shortName>
        <shortName>PTL</shortName>
        <shortName>Pancreatic lipase</shortName>
        <ecNumber evidence="2">3.1.1.3</ecNumber>
    </recommendedName>
</protein>
<evidence type="ECO:0000250" key="1"/>
<evidence type="ECO:0000250" key="2">
    <source>
        <dbReference type="UniProtKB" id="P16233"/>
    </source>
</evidence>
<evidence type="ECO:0000255" key="3"/>
<evidence type="ECO:0000269" key="4">
    <source>
    </source>
</evidence>
<evidence type="ECO:0000303" key="5">
    <source>
    </source>
</evidence>
<evidence type="ECO:0000305" key="6"/>
<organism>
    <name type="scientific">Felis catus</name>
    <name type="common">Cat</name>
    <name type="synonym">Felis silvestris catus</name>
    <dbReference type="NCBI Taxonomy" id="9685"/>
    <lineage>
        <taxon>Eukaryota</taxon>
        <taxon>Metazoa</taxon>
        <taxon>Chordata</taxon>
        <taxon>Craniata</taxon>
        <taxon>Vertebrata</taxon>
        <taxon>Euteleostomi</taxon>
        <taxon>Mammalia</taxon>
        <taxon>Eutheria</taxon>
        <taxon>Laurasiatheria</taxon>
        <taxon>Carnivora</taxon>
        <taxon>Feliformia</taxon>
        <taxon>Felidae</taxon>
        <taxon>Felinae</taxon>
        <taxon>Felis</taxon>
    </lineage>
</organism>
<proteinExistence type="evidence at protein level"/>
<accession>P83629</accession>
<comment type="function">
    <text evidence="2">Plays an important role in fat metabolism. It preferentially splits the esters of long-chain fatty acids at positions 1 and 3, producing mainly 2-monoacylglycerol and free fatty acids, and shows considerably higher activity against insoluble emulsified substrates than against soluble ones.</text>
</comment>
<comment type="catalytic activity">
    <reaction evidence="2">
        <text>a triacylglycerol + H2O = a diacylglycerol + a fatty acid + H(+)</text>
        <dbReference type="Rhea" id="RHEA:12044"/>
        <dbReference type="ChEBI" id="CHEBI:15377"/>
        <dbReference type="ChEBI" id="CHEBI:15378"/>
        <dbReference type="ChEBI" id="CHEBI:17855"/>
        <dbReference type="ChEBI" id="CHEBI:18035"/>
        <dbReference type="ChEBI" id="CHEBI:28868"/>
        <dbReference type="EC" id="3.1.1.3"/>
    </reaction>
    <physiologicalReaction direction="left-to-right" evidence="2">
        <dbReference type="Rhea" id="RHEA:12045"/>
    </physiologicalReaction>
</comment>
<comment type="catalytic activity">
    <reaction evidence="2">
        <text>1,2,3-tributanoylglycerol + H2O = dibutanoylglycerol + butanoate + H(+)</text>
        <dbReference type="Rhea" id="RHEA:40475"/>
        <dbReference type="ChEBI" id="CHEBI:15377"/>
        <dbReference type="ChEBI" id="CHEBI:15378"/>
        <dbReference type="ChEBI" id="CHEBI:17968"/>
        <dbReference type="ChEBI" id="CHEBI:35020"/>
        <dbReference type="ChEBI" id="CHEBI:76478"/>
    </reaction>
    <physiologicalReaction direction="left-to-right" evidence="2">
        <dbReference type="Rhea" id="RHEA:40476"/>
    </physiologicalReaction>
</comment>
<comment type="catalytic activity">
    <reaction evidence="2">
        <text>1,2,3-tri-(9Z-octadecenoyl)-glycerol + H2O = di-(9Z)-octadecenoylglycerol + (9Z)-octadecenoate + H(+)</text>
        <dbReference type="Rhea" id="RHEA:38575"/>
        <dbReference type="ChEBI" id="CHEBI:15377"/>
        <dbReference type="ChEBI" id="CHEBI:15378"/>
        <dbReference type="ChEBI" id="CHEBI:30823"/>
        <dbReference type="ChEBI" id="CHEBI:53753"/>
        <dbReference type="ChEBI" id="CHEBI:75945"/>
    </reaction>
    <physiologicalReaction direction="left-to-right" evidence="2">
        <dbReference type="Rhea" id="RHEA:38576"/>
    </physiologicalReaction>
</comment>
<comment type="catalytic activity">
    <reaction evidence="2">
        <text>all-trans-retinyl hexadecanoate + H2O = all-trans-retinol + hexadecanoate + H(+)</text>
        <dbReference type="Rhea" id="RHEA:13933"/>
        <dbReference type="ChEBI" id="CHEBI:7896"/>
        <dbReference type="ChEBI" id="CHEBI:15377"/>
        <dbReference type="ChEBI" id="CHEBI:15378"/>
        <dbReference type="ChEBI" id="CHEBI:17336"/>
        <dbReference type="ChEBI" id="CHEBI:17616"/>
    </reaction>
    <physiologicalReaction direction="left-to-right" evidence="2">
        <dbReference type="Rhea" id="RHEA:13934"/>
    </physiologicalReaction>
</comment>
<comment type="catalytic activity">
    <reaction evidence="2">
        <text>1,2-di-(9Z-octadecenoyl)-glycerol + H2O = (9Z-octadecenoyl)-glycerol + (9Z)-octadecenoate + H(+)</text>
        <dbReference type="Rhea" id="RHEA:38455"/>
        <dbReference type="ChEBI" id="CHEBI:15377"/>
        <dbReference type="ChEBI" id="CHEBI:15378"/>
        <dbReference type="ChEBI" id="CHEBI:30823"/>
        <dbReference type="ChEBI" id="CHEBI:52323"/>
        <dbReference type="ChEBI" id="CHEBI:75937"/>
    </reaction>
    <physiologicalReaction direction="left-to-right" evidence="2">
        <dbReference type="Rhea" id="RHEA:38456"/>
    </physiologicalReaction>
</comment>
<comment type="activity regulation">
    <text evidence="2">Inhibited by bile salts, is reactivated by (pro)colipase/CLPS.</text>
</comment>
<comment type="subunit">
    <text evidence="2">Forms a 1:1 stoichiometric complex with (pro)colipase/CLPS.</text>
</comment>
<comment type="subcellular location">
    <subcellularLocation>
        <location evidence="2">Secreted</location>
    </subcellularLocation>
</comment>
<comment type="similarity">
    <text evidence="3">Belongs to the AB hydrolase superfamily. Lipase family.</text>
</comment>
<keyword id="KW-0903">Direct protein sequencing</keyword>
<keyword id="KW-1015">Disulfide bond</keyword>
<keyword id="KW-0378">Hydrolase</keyword>
<keyword id="KW-0442">Lipid degradation</keyword>
<keyword id="KW-0443">Lipid metabolism</keyword>
<keyword id="KW-1185">Reference proteome</keyword>
<keyword id="KW-0964">Secreted</keyword>